<proteinExistence type="inferred from homology"/>
<feature type="chain" id="PRO_0000076874" description="Probable 3-isopropylmalate dehydratase large subunit">
    <location>
        <begin position="1"/>
        <end position="419"/>
    </location>
</feature>
<feature type="binding site" evidence="1">
    <location>
        <position position="299"/>
    </location>
    <ligand>
        <name>[4Fe-4S] cluster</name>
        <dbReference type="ChEBI" id="CHEBI:49883"/>
    </ligand>
</feature>
<feature type="binding site" evidence="1">
    <location>
        <position position="359"/>
    </location>
    <ligand>
        <name>[4Fe-4S] cluster</name>
        <dbReference type="ChEBI" id="CHEBI:49883"/>
    </ligand>
</feature>
<feature type="binding site" evidence="1">
    <location>
        <position position="362"/>
    </location>
    <ligand>
        <name>[4Fe-4S] cluster</name>
        <dbReference type="ChEBI" id="CHEBI:49883"/>
    </ligand>
</feature>
<organism>
    <name type="scientific">Methanothermobacter thermautotrophicus (strain ATCC 29096 / DSM 1053 / JCM 10044 / NBRC 100330 / Delta H)</name>
    <name type="common">Methanobacterium thermoautotrophicum</name>
    <dbReference type="NCBI Taxonomy" id="187420"/>
    <lineage>
        <taxon>Archaea</taxon>
        <taxon>Methanobacteriati</taxon>
        <taxon>Methanobacteriota</taxon>
        <taxon>Methanomada group</taxon>
        <taxon>Methanobacteria</taxon>
        <taxon>Methanobacteriales</taxon>
        <taxon>Methanobacteriaceae</taxon>
        <taxon>Methanothermobacter</taxon>
    </lineage>
</organism>
<keyword id="KW-0004">4Fe-4S</keyword>
<keyword id="KW-0028">Amino-acid biosynthesis</keyword>
<keyword id="KW-0100">Branched-chain amino acid biosynthesis</keyword>
<keyword id="KW-0408">Iron</keyword>
<keyword id="KW-0411">Iron-sulfur</keyword>
<keyword id="KW-0432">Leucine biosynthesis</keyword>
<keyword id="KW-0456">Lyase</keyword>
<keyword id="KW-0479">Metal-binding</keyword>
<keyword id="KW-1185">Reference proteome</keyword>
<sequence>MSMTVSEKILARASGKDRVEAGEIVMADIDVAMTHDLTGPLSVESFRAIGEDRVWDPEKIVVIFDHQVPADSIEAAQNHMIMRDFVEEQGIRNFYDVREGVCHQVLPEKGHVVPGEVVVGTDSHTCTHGALGAFATGIGSTDMAMVFATGKLWFRVPETLRFDVRGKLREHVYAKDVILNIIGRVGADGATYMACEFAGETVAEMSVSDRMVLSNMAIEMGGKTGIVEPDEKTLNYVRRRSGKPWRVFKTDPDAPSLSVMEVDVSDLEPQVACPHNVDNVKPVTEVEGTEIDQVFLGSCTNGRLSDLRDAAAILKNRKVSDSVRMLVIPASREVYRRALDEGLIEIFVDAGALVCNPCCGPCLGGHVGLVGPGEVSLSTSNRNFRGRQGSPEAEVYLSSAAVAAASAVKGSITHPGSLK</sequence>
<accession>O27439</accession>
<protein>
    <recommendedName>
        <fullName>Probable 3-isopropylmalate dehydratase large subunit</fullName>
        <ecNumber evidence="1">4.2.1.33</ecNumber>
    </recommendedName>
    <alternativeName>
        <fullName evidence="1">Alpha-IPM isomerase</fullName>
        <shortName evidence="1">IPMI</shortName>
    </alternativeName>
    <alternativeName>
        <fullName evidence="1">Isopropylmalate isomerase</fullName>
    </alternativeName>
</protein>
<evidence type="ECO:0000255" key="1">
    <source>
        <dbReference type="HAMAP-Rule" id="MF_01027"/>
    </source>
</evidence>
<name>LEUC_METTH</name>
<gene>
    <name evidence="1" type="primary">leuC</name>
    <name type="ordered locus">MTH_1386</name>
</gene>
<comment type="function">
    <text evidence="1">Catalyzes the isomerization between 2-isopropylmalate and 3-isopropylmalate, via the formation of 2-isopropylmaleate.</text>
</comment>
<comment type="catalytic activity">
    <reaction evidence="1">
        <text>(2R,3S)-3-isopropylmalate = (2S)-2-isopropylmalate</text>
        <dbReference type="Rhea" id="RHEA:32287"/>
        <dbReference type="ChEBI" id="CHEBI:1178"/>
        <dbReference type="ChEBI" id="CHEBI:35121"/>
        <dbReference type="EC" id="4.2.1.33"/>
    </reaction>
</comment>
<comment type="cofactor">
    <cofactor evidence="1">
        <name>[4Fe-4S] cluster</name>
        <dbReference type="ChEBI" id="CHEBI:49883"/>
    </cofactor>
    <text evidence="1">Binds 1 [4Fe-4S] cluster per subunit.</text>
</comment>
<comment type="pathway">
    <text evidence="1">Amino-acid biosynthesis; L-leucine biosynthesis; L-leucine from 3-methyl-2-oxobutanoate: step 2/4.</text>
</comment>
<comment type="subunit">
    <text evidence="1">Heterodimer of LeuC and LeuD.</text>
</comment>
<comment type="similarity">
    <text evidence="1">Belongs to the aconitase/IPM isomerase family. LeuC type 2 subfamily.</text>
</comment>
<reference key="1">
    <citation type="journal article" date="1997" name="J. Bacteriol.">
        <title>Complete genome sequence of Methanobacterium thermoautotrophicum deltaH: functional analysis and comparative genomics.</title>
        <authorList>
            <person name="Smith D.R."/>
            <person name="Doucette-Stamm L.A."/>
            <person name="Deloughery C."/>
            <person name="Lee H.-M."/>
            <person name="Dubois J."/>
            <person name="Aldredge T."/>
            <person name="Bashirzadeh R."/>
            <person name="Blakely D."/>
            <person name="Cook R."/>
            <person name="Gilbert K."/>
            <person name="Harrison D."/>
            <person name="Hoang L."/>
            <person name="Keagle P."/>
            <person name="Lumm W."/>
            <person name="Pothier B."/>
            <person name="Qiu D."/>
            <person name="Spadafora R."/>
            <person name="Vicare R."/>
            <person name="Wang Y."/>
            <person name="Wierzbowski J."/>
            <person name="Gibson R."/>
            <person name="Jiwani N."/>
            <person name="Caruso A."/>
            <person name="Bush D."/>
            <person name="Safer H."/>
            <person name="Patwell D."/>
            <person name="Prabhakar S."/>
            <person name="McDougall S."/>
            <person name="Shimer G."/>
            <person name="Goyal A."/>
            <person name="Pietrovski S."/>
            <person name="Church G.M."/>
            <person name="Daniels C.J."/>
            <person name="Mao J.-I."/>
            <person name="Rice P."/>
            <person name="Noelling J."/>
            <person name="Reeve J.N."/>
        </authorList>
    </citation>
    <scope>NUCLEOTIDE SEQUENCE [LARGE SCALE GENOMIC DNA]</scope>
    <source>
        <strain>ATCC 29096 / DSM 1053 / JCM 10044 / NBRC 100330 / Delta H</strain>
    </source>
</reference>
<dbReference type="EC" id="4.2.1.33" evidence="1"/>
<dbReference type="EMBL" id="AE000666">
    <property type="protein sequence ID" value="AAB85863.1"/>
    <property type="molecule type" value="Genomic_DNA"/>
</dbReference>
<dbReference type="PIR" id="D69051">
    <property type="entry name" value="D69051"/>
</dbReference>
<dbReference type="SMR" id="O27439"/>
<dbReference type="FunCoup" id="O27439">
    <property type="interactions" value="174"/>
</dbReference>
<dbReference type="STRING" id="187420.MTH_1386"/>
<dbReference type="PaxDb" id="187420-MTH_1386"/>
<dbReference type="EnsemblBacteria" id="AAB85863">
    <property type="protein sequence ID" value="AAB85863"/>
    <property type="gene ID" value="MTH_1386"/>
</dbReference>
<dbReference type="KEGG" id="mth:MTH_1386"/>
<dbReference type="PATRIC" id="fig|187420.15.peg.1351"/>
<dbReference type="HOGENOM" id="CLU_006714_3_4_2"/>
<dbReference type="InParanoid" id="O27439"/>
<dbReference type="UniPathway" id="UPA00048">
    <property type="reaction ID" value="UER00071"/>
</dbReference>
<dbReference type="Proteomes" id="UP000005223">
    <property type="component" value="Chromosome"/>
</dbReference>
<dbReference type="GO" id="GO:0003861">
    <property type="term" value="F:3-isopropylmalate dehydratase activity"/>
    <property type="evidence" value="ECO:0007669"/>
    <property type="project" value="UniProtKB-UniRule"/>
</dbReference>
<dbReference type="GO" id="GO:0051539">
    <property type="term" value="F:4 iron, 4 sulfur cluster binding"/>
    <property type="evidence" value="ECO:0007669"/>
    <property type="project" value="UniProtKB-KW"/>
</dbReference>
<dbReference type="GO" id="GO:0046872">
    <property type="term" value="F:metal ion binding"/>
    <property type="evidence" value="ECO:0007669"/>
    <property type="project" value="UniProtKB-KW"/>
</dbReference>
<dbReference type="GO" id="GO:0009098">
    <property type="term" value="P:L-leucine biosynthetic process"/>
    <property type="evidence" value="ECO:0007669"/>
    <property type="project" value="UniProtKB-UniRule"/>
</dbReference>
<dbReference type="CDD" id="cd01583">
    <property type="entry name" value="IPMI"/>
    <property type="match status" value="1"/>
</dbReference>
<dbReference type="Gene3D" id="3.30.499.10">
    <property type="entry name" value="Aconitase, domain 3"/>
    <property type="match status" value="2"/>
</dbReference>
<dbReference type="HAMAP" id="MF_01027">
    <property type="entry name" value="LeuC_type2"/>
    <property type="match status" value="1"/>
</dbReference>
<dbReference type="InterPro" id="IPR015931">
    <property type="entry name" value="Acnase/IPM_dHydase_lsu_aba_1/3"/>
</dbReference>
<dbReference type="InterPro" id="IPR001030">
    <property type="entry name" value="Acoase/IPM_deHydtase_lsu_aba"/>
</dbReference>
<dbReference type="InterPro" id="IPR018136">
    <property type="entry name" value="Aconitase_4Fe-4S_BS"/>
</dbReference>
<dbReference type="InterPro" id="IPR036008">
    <property type="entry name" value="Aconitase_4Fe-4S_dom"/>
</dbReference>
<dbReference type="InterPro" id="IPR011826">
    <property type="entry name" value="HAcnase/IPMdehydase_lsu_prok"/>
</dbReference>
<dbReference type="InterPro" id="IPR006251">
    <property type="entry name" value="Homoacnase/IPMdehydase_lsu"/>
</dbReference>
<dbReference type="InterPro" id="IPR050067">
    <property type="entry name" value="IPM_dehydratase_rel_enz"/>
</dbReference>
<dbReference type="InterPro" id="IPR033941">
    <property type="entry name" value="IPMI_cat"/>
</dbReference>
<dbReference type="NCBIfam" id="TIGR01343">
    <property type="entry name" value="hacA_fam"/>
    <property type="match status" value="1"/>
</dbReference>
<dbReference type="NCBIfam" id="NF040615">
    <property type="entry name" value="HacA_Meth"/>
    <property type="match status" value="1"/>
</dbReference>
<dbReference type="NCBIfam" id="TIGR02086">
    <property type="entry name" value="IPMI_arch"/>
    <property type="match status" value="1"/>
</dbReference>
<dbReference type="NCBIfam" id="NF001614">
    <property type="entry name" value="PRK00402.1"/>
    <property type="match status" value="1"/>
</dbReference>
<dbReference type="PANTHER" id="PTHR43822">
    <property type="entry name" value="HOMOACONITASE, MITOCHONDRIAL-RELATED"/>
    <property type="match status" value="1"/>
</dbReference>
<dbReference type="PANTHER" id="PTHR43822:SF22">
    <property type="entry name" value="ISOPROPYLMALATE_CITRAMALATE ISOMERASE LARGE SUBUNIT"/>
    <property type="match status" value="1"/>
</dbReference>
<dbReference type="Pfam" id="PF00330">
    <property type="entry name" value="Aconitase"/>
    <property type="match status" value="1"/>
</dbReference>
<dbReference type="PRINTS" id="PR00415">
    <property type="entry name" value="ACONITASE"/>
</dbReference>
<dbReference type="SUPFAM" id="SSF53732">
    <property type="entry name" value="Aconitase iron-sulfur domain"/>
    <property type="match status" value="1"/>
</dbReference>
<dbReference type="PROSITE" id="PS00450">
    <property type="entry name" value="ACONITASE_1"/>
    <property type="match status" value="1"/>
</dbReference>
<dbReference type="PROSITE" id="PS01244">
    <property type="entry name" value="ACONITASE_2"/>
    <property type="match status" value="1"/>
</dbReference>